<protein>
    <recommendedName>
        <fullName evidence="1">Ribosome-recycling factor</fullName>
        <shortName evidence="1">RRF</shortName>
    </recommendedName>
    <alternativeName>
        <fullName evidence="1">Ribosome-releasing factor</fullName>
    </alternativeName>
</protein>
<keyword id="KW-0963">Cytoplasm</keyword>
<keyword id="KW-0648">Protein biosynthesis</keyword>
<feature type="chain" id="PRO_1000202110" description="Ribosome-recycling factor">
    <location>
        <begin position="1"/>
        <end position="186"/>
    </location>
</feature>
<organism>
    <name type="scientific">Rickettsia peacockii (strain Rustic)</name>
    <dbReference type="NCBI Taxonomy" id="562019"/>
    <lineage>
        <taxon>Bacteria</taxon>
        <taxon>Pseudomonadati</taxon>
        <taxon>Pseudomonadota</taxon>
        <taxon>Alphaproteobacteria</taxon>
        <taxon>Rickettsiales</taxon>
        <taxon>Rickettsiaceae</taxon>
        <taxon>Rickettsieae</taxon>
        <taxon>Rickettsia</taxon>
        <taxon>spotted fever group</taxon>
    </lineage>
</organism>
<accession>C4K0R2</accession>
<dbReference type="EMBL" id="CP001227">
    <property type="protein sequence ID" value="ACR47163.1"/>
    <property type="molecule type" value="Genomic_DNA"/>
</dbReference>
<dbReference type="RefSeq" id="WP_012736453.1">
    <property type="nucleotide sequence ID" value="NC_012730.1"/>
</dbReference>
<dbReference type="SMR" id="C4K0R2"/>
<dbReference type="KEGG" id="rpk:RPR_01240"/>
<dbReference type="HOGENOM" id="CLU_073981_2_1_5"/>
<dbReference type="Proteomes" id="UP000005015">
    <property type="component" value="Chromosome"/>
</dbReference>
<dbReference type="GO" id="GO:0005829">
    <property type="term" value="C:cytosol"/>
    <property type="evidence" value="ECO:0007669"/>
    <property type="project" value="GOC"/>
</dbReference>
<dbReference type="GO" id="GO:0043023">
    <property type="term" value="F:ribosomal large subunit binding"/>
    <property type="evidence" value="ECO:0007669"/>
    <property type="project" value="TreeGrafter"/>
</dbReference>
<dbReference type="GO" id="GO:0002184">
    <property type="term" value="P:cytoplasmic translational termination"/>
    <property type="evidence" value="ECO:0007669"/>
    <property type="project" value="TreeGrafter"/>
</dbReference>
<dbReference type="CDD" id="cd00520">
    <property type="entry name" value="RRF"/>
    <property type="match status" value="1"/>
</dbReference>
<dbReference type="FunFam" id="1.10.132.20:FF:000001">
    <property type="entry name" value="Ribosome-recycling factor"/>
    <property type="match status" value="1"/>
</dbReference>
<dbReference type="FunFam" id="3.30.1360.40:FF:000001">
    <property type="entry name" value="Ribosome-recycling factor"/>
    <property type="match status" value="1"/>
</dbReference>
<dbReference type="Gene3D" id="3.30.1360.40">
    <property type="match status" value="1"/>
</dbReference>
<dbReference type="Gene3D" id="1.10.132.20">
    <property type="entry name" value="Ribosome-recycling factor"/>
    <property type="match status" value="1"/>
</dbReference>
<dbReference type="HAMAP" id="MF_00040">
    <property type="entry name" value="RRF"/>
    <property type="match status" value="1"/>
</dbReference>
<dbReference type="InterPro" id="IPR002661">
    <property type="entry name" value="Ribosome_recyc_fac"/>
</dbReference>
<dbReference type="InterPro" id="IPR023584">
    <property type="entry name" value="Ribosome_recyc_fac_dom"/>
</dbReference>
<dbReference type="InterPro" id="IPR036191">
    <property type="entry name" value="RRF_sf"/>
</dbReference>
<dbReference type="NCBIfam" id="TIGR00496">
    <property type="entry name" value="frr"/>
    <property type="match status" value="1"/>
</dbReference>
<dbReference type="PANTHER" id="PTHR20982:SF3">
    <property type="entry name" value="MITOCHONDRIAL RIBOSOME RECYCLING FACTOR PSEUDO 1"/>
    <property type="match status" value="1"/>
</dbReference>
<dbReference type="PANTHER" id="PTHR20982">
    <property type="entry name" value="RIBOSOME RECYCLING FACTOR"/>
    <property type="match status" value="1"/>
</dbReference>
<dbReference type="Pfam" id="PF01765">
    <property type="entry name" value="RRF"/>
    <property type="match status" value="1"/>
</dbReference>
<dbReference type="SUPFAM" id="SSF55194">
    <property type="entry name" value="Ribosome recycling factor, RRF"/>
    <property type="match status" value="1"/>
</dbReference>
<proteinExistence type="inferred from homology"/>
<comment type="function">
    <text evidence="1">Responsible for the release of ribosomes from messenger RNA at the termination of protein biosynthesis. May increase the efficiency of translation by recycling ribosomes from one round of translation to another.</text>
</comment>
<comment type="subcellular location">
    <subcellularLocation>
        <location evidence="1">Cytoplasm</location>
    </subcellularLocation>
</comment>
<comment type="similarity">
    <text evidence="1">Belongs to the RRF family.</text>
</comment>
<reference key="1">
    <citation type="journal article" date="2009" name="PLoS ONE">
        <title>Genome sequence of the endosymbiont Rickettsia peacockii and comparison with virulent Rickettsia rickettsii: identification of virulence factors.</title>
        <authorList>
            <person name="Felsheim R.F."/>
            <person name="Kurtti T.J."/>
            <person name="Munderloh U.G."/>
        </authorList>
    </citation>
    <scope>NUCLEOTIDE SEQUENCE [LARGE SCALE GENOMIC DNA]</scope>
    <source>
        <strain>Rustic</strain>
    </source>
</reference>
<gene>
    <name evidence="1" type="primary">frr</name>
    <name type="ordered locus">RPR_01240</name>
</gene>
<evidence type="ECO:0000255" key="1">
    <source>
        <dbReference type="HAMAP-Rule" id="MF_00040"/>
    </source>
</evidence>
<sequence>MDKEHLKKNLQEKMEKALKVLDHELKGLRTGRASVNLLDSVTVEAYGSKMPLSQVASLSTPDARTINVQVWDKSMVSSVEKGITIANLGLTPATDGQLIRLPIPALTEERRTELVKLAHKYGEDTKISLRNIRRDGNEALKKLEKDNVIAKDEHHSLSEQVQKLTDDYSSKVDSVIKQKEQEIMTV</sequence>
<name>RRF_RICPU</name>